<organism>
    <name type="scientific">Staphylococcus haemolyticus</name>
    <dbReference type="NCBI Taxonomy" id="1283"/>
    <lineage>
        <taxon>Bacteria</taxon>
        <taxon>Bacillati</taxon>
        <taxon>Bacillota</taxon>
        <taxon>Bacilli</taxon>
        <taxon>Bacillales</taxon>
        <taxon>Staphylococcaceae</taxon>
        <taxon>Staphylococcus</taxon>
    </lineage>
</organism>
<keyword id="KW-0002">3D-structure</keyword>
<keyword id="KW-0046">Antibiotic resistance</keyword>
<protein>
    <recommendedName>
        <fullName>Lincosamide resistance protein</fullName>
    </recommendedName>
</protein>
<feature type="chain" id="PRO_0000068570" description="Lincosamide resistance protein">
    <location>
        <begin position="1"/>
        <end position="161"/>
    </location>
</feature>
<feature type="helix" evidence="1">
    <location>
        <begin position="8"/>
        <end position="21"/>
    </location>
</feature>
<feature type="strand" evidence="1">
    <location>
        <begin position="25"/>
        <end position="28"/>
    </location>
</feature>
<feature type="helix" evidence="1">
    <location>
        <begin position="29"/>
        <end position="37"/>
    </location>
</feature>
<feature type="strand" evidence="1">
    <location>
        <begin position="45"/>
        <end position="52"/>
    </location>
</feature>
<feature type="helix" evidence="1">
    <location>
        <begin position="53"/>
        <end position="55"/>
    </location>
</feature>
<feature type="helix" evidence="1">
    <location>
        <begin position="56"/>
        <end position="65"/>
    </location>
</feature>
<feature type="strand" evidence="1">
    <location>
        <begin position="69"/>
        <end position="74"/>
    </location>
</feature>
<feature type="turn" evidence="1">
    <location>
        <begin position="75"/>
        <end position="77"/>
    </location>
</feature>
<feature type="strand" evidence="1">
    <location>
        <begin position="78"/>
        <end position="83"/>
    </location>
</feature>
<feature type="turn" evidence="1">
    <location>
        <begin position="84"/>
        <end position="86"/>
    </location>
</feature>
<feature type="strand" evidence="1">
    <location>
        <begin position="87"/>
        <end position="96"/>
    </location>
</feature>
<feature type="strand" evidence="1">
    <location>
        <begin position="102"/>
        <end position="105"/>
    </location>
</feature>
<feature type="strand" evidence="1">
    <location>
        <begin position="109"/>
        <end position="114"/>
    </location>
</feature>
<feature type="helix" evidence="1">
    <location>
        <begin position="116"/>
        <end position="118"/>
    </location>
</feature>
<feature type="strand" evidence="1">
    <location>
        <begin position="119"/>
        <end position="124"/>
    </location>
</feature>
<feature type="strand" evidence="1">
    <location>
        <begin position="127"/>
        <end position="132"/>
    </location>
</feature>
<feature type="helix" evidence="1">
    <location>
        <begin position="134"/>
        <end position="140"/>
    </location>
</feature>
<feature type="helix" evidence="1">
    <location>
        <begin position="143"/>
        <end position="145"/>
    </location>
</feature>
<feature type="helix" evidence="1">
    <location>
        <begin position="148"/>
        <end position="158"/>
    </location>
</feature>
<gene>
    <name type="primary">linA</name>
</gene>
<accession>P06107</accession>
<name>LINA_STAHA</name>
<evidence type="ECO:0007829" key="1">
    <source>
        <dbReference type="PDB" id="4WH5"/>
    </source>
</evidence>
<reference key="1">
    <citation type="journal article" date="1986" name="Gene">
        <title>Nucleotide sequence of gene linA encoding resistance to lincosamides in Staphylococcus haemolyticus.</title>
        <authorList>
            <person name="Brisson-Noel A."/>
            <person name="Courvalin P."/>
        </authorList>
    </citation>
    <scope>NUCLEOTIDE SEQUENCE [GENOMIC DNA]</scope>
</reference>
<sequence>MKNNNVTEKELFYILDLFEHMKVTYWLDGGWGVDVLTGKQQREHRDIDIDFDAQHTQKVIQKLEDIGYKIEVHWMPSRMELKHEEYGYLDIHPINLNDDGSITQANPEGGNYVFQNDWFSETNYKDRKIPCISKEAQLLFHSGYDLTETDHFDIKNLKSIT</sequence>
<proteinExistence type="evidence at protein level"/>
<dbReference type="EMBL" id="M14039">
    <property type="protein sequence ID" value="AAA26652.1"/>
    <property type="molecule type" value="Genomic_DNA"/>
</dbReference>
<dbReference type="PIR" id="A25633">
    <property type="entry name" value="A25633"/>
</dbReference>
<dbReference type="RefSeq" id="WP_063851340.1">
    <property type="nucleotide sequence ID" value="NG_047913.1"/>
</dbReference>
<dbReference type="PDB" id="4FO1">
    <property type="method" value="X-ray"/>
    <property type="resolution" value="2.15 A"/>
    <property type="chains" value="A/B=1-161"/>
</dbReference>
<dbReference type="PDB" id="4WH5">
    <property type="method" value="X-ray"/>
    <property type="resolution" value="1.82 A"/>
    <property type="chains" value="A/B=2-161"/>
</dbReference>
<dbReference type="PDBsum" id="4FO1"/>
<dbReference type="PDBsum" id="4WH5"/>
<dbReference type="SMR" id="P06107"/>
<dbReference type="CARD" id="ARO:3002835">
    <property type="molecule name" value="lnuA"/>
    <property type="mechanism identifier" value="ARO:0001004"/>
    <property type="mechanism name" value="antibiotic inactivation"/>
</dbReference>
<dbReference type="KEGG" id="ag:AAA26652"/>
<dbReference type="EvolutionaryTrace" id="P06107"/>
<dbReference type="GO" id="GO:0046677">
    <property type="term" value="P:response to antibiotic"/>
    <property type="evidence" value="ECO:0007669"/>
    <property type="project" value="UniProtKB-KW"/>
</dbReference>
<dbReference type="Gene3D" id="3.30.460.40">
    <property type="match status" value="1"/>
</dbReference>
<dbReference type="InterPro" id="IPR019646">
    <property type="entry name" value="Aminoglyc_AdlTrfase"/>
</dbReference>
<dbReference type="InterPro" id="IPR043519">
    <property type="entry name" value="NT_sf"/>
</dbReference>
<dbReference type="NCBIfam" id="NF000236">
    <property type="entry name" value="linco_LnuA"/>
    <property type="match status" value="1"/>
</dbReference>
<dbReference type="Pfam" id="PF10706">
    <property type="entry name" value="Aminoglyc_resit"/>
    <property type="match status" value="1"/>
</dbReference>
<dbReference type="SUPFAM" id="SSF81301">
    <property type="entry name" value="Nucleotidyltransferase"/>
    <property type="match status" value="1"/>
</dbReference>